<evidence type="ECO:0000255" key="1">
    <source>
        <dbReference type="PROSITE-ProRule" id="PRU00176"/>
    </source>
</evidence>
<evidence type="ECO:0000256" key="2">
    <source>
        <dbReference type="SAM" id="MobiDB-lite"/>
    </source>
</evidence>
<evidence type="ECO:0000269" key="3">
    <source>
    </source>
</evidence>
<evidence type="ECO:0000305" key="4"/>
<sequence length="483" mass="50817">MDFIMANTGAGGGVDTQAQLMQSAAAAAAVAATNAAAAPVQNAAAVAAAAQLQQQQVQQAILQVQQQQTQQAVAAAAAAVTQQLQQQQQAVVAQQAVVQQQQQQAAAVVQQAAVQQAVVPQPQQAQPNTNGNAGSGSQNGSNGSTETRTNLIVNYLPQTMTEDEIRSLFSSVGEIESVKLIRDKSQVYIDPLNPQAPSKGQSLGYGFVNYVRPQDAEQAVNVLNGLRLQNKTIKVSFARPSSDAIKGANLYVSGLPKTMTQQELEAIFAPFGAIITSRILQNAGNDTQTKGVGFIRFDKREEATRAIIALNGTTPSSCTDPIVVKFSNTPGSTSKIIQPQLPAFLNPQLVRRIGGAMHTPVNKGLARFSPMAGDMLDVMLPNGLGAAAAAATTLASGPGGAYPIFIYNLAPETEEAALWQLFGPFGAVQSVKIVKDPTTNQCKGYGFVSMTNYDEAAMAIRALNGYTMGNRVLQVSFKTNKAK</sequence>
<keyword id="KW-0025">Alternative splicing</keyword>
<keyword id="KW-1185">Reference proteome</keyword>
<keyword id="KW-0677">Repeat</keyword>
<keyword id="KW-0694">RNA-binding</keyword>
<name>ELAV_DROME</name>
<proteinExistence type="evidence at transcript level"/>
<dbReference type="EMBL" id="M21152">
    <property type="protein sequence ID" value="AAA28506.1"/>
    <property type="molecule type" value="mRNA"/>
</dbReference>
<dbReference type="EMBL" id="AE014298">
    <property type="protein sequence ID" value="AAF45517.2"/>
    <property type="molecule type" value="Genomic_DNA"/>
</dbReference>
<dbReference type="EMBL" id="AE014298">
    <property type="protein sequence ID" value="ACL82875.1"/>
    <property type="molecule type" value="Genomic_DNA"/>
</dbReference>
<dbReference type="EMBL" id="AE014298">
    <property type="protein sequence ID" value="AAX52472.1"/>
    <property type="molecule type" value="Genomic_DNA"/>
</dbReference>
<dbReference type="EMBL" id="AL022139">
    <property type="protein sequence ID" value="CAA18091.1"/>
    <property type="molecule type" value="Genomic_DNA"/>
</dbReference>
<dbReference type="EMBL" id="AL022139">
    <property type="protein sequence ID" value="CAB37430.1"/>
    <property type="molecule type" value="Genomic_DNA"/>
</dbReference>
<dbReference type="EMBL" id="AY051822">
    <property type="protein sequence ID" value="AAK93246.1"/>
    <property type="molecule type" value="mRNA"/>
</dbReference>
<dbReference type="PIR" id="A33130">
    <property type="entry name" value="A33130"/>
</dbReference>
<dbReference type="RefSeq" id="NP_001014713.1">
    <molecule id="P16914-2"/>
    <property type="nucleotide sequence ID" value="NM_001014713.4"/>
</dbReference>
<dbReference type="RefSeq" id="NP_001138142.1">
    <molecule id="P16914-2"/>
    <property type="nucleotide sequence ID" value="NM_001144670.2"/>
</dbReference>
<dbReference type="RefSeq" id="NP_001245447.1">
    <molecule id="P16914-1"/>
    <property type="nucleotide sequence ID" value="NM_001258518.3"/>
</dbReference>
<dbReference type="RefSeq" id="NP_525033.1">
    <molecule id="P16914-1"/>
    <property type="nucleotide sequence ID" value="NM_080294.5"/>
</dbReference>
<dbReference type="SMR" id="P16914"/>
<dbReference type="BioGRID" id="57569">
    <property type="interactions" value="22"/>
</dbReference>
<dbReference type="DIP" id="DIP-23700N"/>
<dbReference type="FunCoup" id="P16914">
    <property type="interactions" value="45"/>
</dbReference>
<dbReference type="IntAct" id="P16914">
    <property type="interactions" value="4"/>
</dbReference>
<dbReference type="STRING" id="7227.FBpp0298002"/>
<dbReference type="PaxDb" id="7227-FBpp0298002"/>
<dbReference type="DNASU" id="31000"/>
<dbReference type="EnsemblMetazoa" id="FBtr0070091">
    <molecule id="P16914-1"/>
    <property type="protein sequence ID" value="FBpp0070086"/>
    <property type="gene ID" value="FBgn0260400"/>
</dbReference>
<dbReference type="EnsemblMetazoa" id="FBtr0100254">
    <molecule id="P16914-2"/>
    <property type="protein sequence ID" value="FBpp0099643"/>
    <property type="gene ID" value="FBgn0260400"/>
</dbReference>
<dbReference type="EnsemblMetazoa" id="FBtr0114366">
    <molecule id="P16914-2"/>
    <property type="protein sequence ID" value="FBpp0112915"/>
    <property type="gene ID" value="FBgn0260400"/>
</dbReference>
<dbReference type="EnsemblMetazoa" id="FBtr0307173">
    <molecule id="P16914-1"/>
    <property type="protein sequence ID" value="FBpp0298002"/>
    <property type="gene ID" value="FBgn0260400"/>
</dbReference>
<dbReference type="GeneID" id="31000"/>
<dbReference type="KEGG" id="dme:Dmel_CG4262"/>
<dbReference type="UCSC" id="CG4262-RB">
    <property type="organism name" value="d. melanogaster"/>
</dbReference>
<dbReference type="AGR" id="FB:FBgn0260400"/>
<dbReference type="CTD" id="31000"/>
<dbReference type="FlyBase" id="FBgn0260400">
    <property type="gene designation" value="elav"/>
</dbReference>
<dbReference type="VEuPathDB" id="VectorBase:FBgn0260400"/>
<dbReference type="eggNOG" id="KOG0145">
    <property type="taxonomic scope" value="Eukaryota"/>
</dbReference>
<dbReference type="InParanoid" id="P16914"/>
<dbReference type="OMA" id="NAEMADH"/>
<dbReference type="OrthoDB" id="266020at2759"/>
<dbReference type="PhylomeDB" id="P16914"/>
<dbReference type="Reactome" id="R-DME-450520">
    <property type="pathway name" value="HuR (ELAVL1) binds and stabilizes mRNA"/>
</dbReference>
<dbReference type="BioGRID-ORCS" id="31000">
    <property type="hits" value="0 hits in 3 CRISPR screens"/>
</dbReference>
<dbReference type="GenomeRNAi" id="31000"/>
<dbReference type="PRO" id="PR:P16914"/>
<dbReference type="Proteomes" id="UP000000803">
    <property type="component" value="Chromosome X"/>
</dbReference>
<dbReference type="Bgee" id="FBgn0260400">
    <property type="expression patterns" value="Expressed in photoreceptor cell R7 (Drosophila) in insect head and 276 other cell types or tissues"/>
</dbReference>
<dbReference type="ExpressionAtlas" id="P16914">
    <property type="expression patterns" value="baseline and differential"/>
</dbReference>
<dbReference type="GO" id="GO:0015030">
    <property type="term" value="C:Cajal body"/>
    <property type="evidence" value="ECO:0000314"/>
    <property type="project" value="FlyBase"/>
</dbReference>
<dbReference type="GO" id="GO:0005634">
    <property type="term" value="C:nucleus"/>
    <property type="evidence" value="ECO:0000314"/>
    <property type="project" value="FlyBase"/>
</dbReference>
<dbReference type="GO" id="GO:1990904">
    <property type="term" value="C:ribonucleoprotein complex"/>
    <property type="evidence" value="ECO:0007669"/>
    <property type="project" value="InterPro"/>
</dbReference>
<dbReference type="GO" id="GO:0003729">
    <property type="term" value="F:mRNA binding"/>
    <property type="evidence" value="ECO:0000250"/>
    <property type="project" value="FlyBase"/>
</dbReference>
<dbReference type="GO" id="GO:0000900">
    <property type="term" value="F:mRNA regulatory element binding translation repressor activity"/>
    <property type="evidence" value="ECO:0000303"/>
    <property type="project" value="UniProtKB"/>
</dbReference>
<dbReference type="GO" id="GO:0008266">
    <property type="term" value="F:poly(U) RNA binding"/>
    <property type="evidence" value="ECO:0000314"/>
    <property type="project" value="FlyBase"/>
</dbReference>
<dbReference type="GO" id="GO:0003723">
    <property type="term" value="F:RNA binding"/>
    <property type="evidence" value="ECO:0000314"/>
    <property type="project" value="FlyBase"/>
</dbReference>
<dbReference type="GO" id="GO:0007417">
    <property type="term" value="P:central nervous system development"/>
    <property type="evidence" value="ECO:0000315"/>
    <property type="project" value="FlyBase"/>
</dbReference>
<dbReference type="GO" id="GO:0009792">
    <property type="term" value="P:embryo development ending in birth or egg hatching"/>
    <property type="evidence" value="ECO:0000303"/>
    <property type="project" value="UniProtKB"/>
</dbReference>
<dbReference type="GO" id="GO:0007281">
    <property type="term" value="P:germ cell development"/>
    <property type="evidence" value="ECO:0000303"/>
    <property type="project" value="UniProtKB"/>
</dbReference>
<dbReference type="GO" id="GO:0031441">
    <property type="term" value="P:negative regulation of mRNA 3'-end processing"/>
    <property type="evidence" value="ECO:0000314"/>
    <property type="project" value="FlyBase"/>
</dbReference>
<dbReference type="GO" id="GO:0007319">
    <property type="term" value="P:negative regulation of oskar mRNA translation"/>
    <property type="evidence" value="ECO:0000303"/>
    <property type="project" value="UniProtKB"/>
</dbReference>
<dbReference type="GO" id="GO:0007399">
    <property type="term" value="P:nervous system development"/>
    <property type="evidence" value="ECO:0000303"/>
    <property type="project" value="FlyBase"/>
</dbReference>
<dbReference type="CDD" id="cd12650">
    <property type="entry name" value="RRM1_Hu"/>
    <property type="match status" value="1"/>
</dbReference>
<dbReference type="CDD" id="cd12652">
    <property type="entry name" value="RRM2_Hu"/>
    <property type="match status" value="1"/>
</dbReference>
<dbReference type="CDD" id="cd12377">
    <property type="entry name" value="RRM3_Hu"/>
    <property type="match status" value="1"/>
</dbReference>
<dbReference type="FunFam" id="3.30.70.330:FF:000480">
    <property type="entry name" value="Fne, isoform A"/>
    <property type="match status" value="1"/>
</dbReference>
<dbReference type="FunFam" id="3.30.70.330:FF:000510">
    <property type="entry name" value="protein elav isoform X1"/>
    <property type="match status" value="1"/>
</dbReference>
<dbReference type="FunFam" id="3.30.70.330:FF:000205">
    <property type="entry name" value="Sex lethal, isoform B"/>
    <property type="match status" value="1"/>
</dbReference>
<dbReference type="Gene3D" id="3.30.70.330">
    <property type="match status" value="3"/>
</dbReference>
<dbReference type="InterPro" id="IPR006548">
    <property type="entry name" value="ELAD_HU_SF"/>
</dbReference>
<dbReference type="InterPro" id="IPR034775">
    <property type="entry name" value="Elav_RRM1"/>
</dbReference>
<dbReference type="InterPro" id="IPR002343">
    <property type="entry name" value="Hud_Sxl_RNA"/>
</dbReference>
<dbReference type="InterPro" id="IPR012677">
    <property type="entry name" value="Nucleotide-bd_a/b_plait_sf"/>
</dbReference>
<dbReference type="InterPro" id="IPR035979">
    <property type="entry name" value="RBD_domain_sf"/>
</dbReference>
<dbReference type="InterPro" id="IPR000504">
    <property type="entry name" value="RRM_dom"/>
</dbReference>
<dbReference type="NCBIfam" id="TIGR01661">
    <property type="entry name" value="ELAV_HUD_SF"/>
    <property type="match status" value="1"/>
</dbReference>
<dbReference type="PANTHER" id="PTHR10352">
    <property type="entry name" value="EUKARYOTIC TRANSLATION INITIATION FACTOR 3 SUBUNIT G"/>
    <property type="match status" value="1"/>
</dbReference>
<dbReference type="Pfam" id="PF00076">
    <property type="entry name" value="RRM_1"/>
    <property type="match status" value="4"/>
</dbReference>
<dbReference type="PRINTS" id="PR00961">
    <property type="entry name" value="HUDSXLRNA"/>
</dbReference>
<dbReference type="SMART" id="SM00360">
    <property type="entry name" value="RRM"/>
    <property type="match status" value="3"/>
</dbReference>
<dbReference type="SUPFAM" id="SSF54928">
    <property type="entry name" value="RNA-binding domain, RBD"/>
    <property type="match status" value="2"/>
</dbReference>
<dbReference type="PROSITE" id="PS50102">
    <property type="entry name" value="RRM"/>
    <property type="match status" value="3"/>
</dbReference>
<reference key="1">
    <citation type="journal article" date="1988" name="Science">
        <title>The elav gene product of Drosophila, required in neurons, has three RNP consensus motifs.</title>
        <authorList>
            <person name="Robinow S."/>
            <person name="Campos A.R."/>
            <person name="Yao K.-M."/>
            <person name="White K."/>
        </authorList>
    </citation>
    <scope>NUCLEOTIDE SEQUENCE [MRNA] (ISOFORM A)</scope>
    <scope>FUNCTION</scope>
    <source>
        <strain>Canton-S</strain>
    </source>
</reference>
<reference key="2">
    <citation type="journal article" date="1989" name="Science">
        <authorList>
            <person name="Robinow S."/>
            <person name="Campos A.R."/>
            <person name="Yao K.-M."/>
            <person name="White K."/>
        </authorList>
    </citation>
    <scope>ERRATUM OF PUBMED:3144044</scope>
</reference>
<reference key="3">
    <citation type="journal article" date="2000" name="Science">
        <title>The genome sequence of Drosophila melanogaster.</title>
        <authorList>
            <person name="Adams M.D."/>
            <person name="Celniker S.E."/>
            <person name="Holt R.A."/>
            <person name="Evans C.A."/>
            <person name="Gocayne J.D."/>
            <person name="Amanatides P.G."/>
            <person name="Scherer S.E."/>
            <person name="Li P.W."/>
            <person name="Hoskins R.A."/>
            <person name="Galle R.F."/>
            <person name="George R.A."/>
            <person name="Lewis S.E."/>
            <person name="Richards S."/>
            <person name="Ashburner M."/>
            <person name="Henderson S.N."/>
            <person name="Sutton G.G."/>
            <person name="Wortman J.R."/>
            <person name="Yandell M.D."/>
            <person name="Zhang Q."/>
            <person name="Chen L.X."/>
            <person name="Brandon R.C."/>
            <person name="Rogers Y.-H.C."/>
            <person name="Blazej R.G."/>
            <person name="Champe M."/>
            <person name="Pfeiffer B.D."/>
            <person name="Wan K.H."/>
            <person name="Doyle C."/>
            <person name="Baxter E.G."/>
            <person name="Helt G."/>
            <person name="Nelson C.R."/>
            <person name="Miklos G.L.G."/>
            <person name="Abril J.F."/>
            <person name="Agbayani A."/>
            <person name="An H.-J."/>
            <person name="Andrews-Pfannkoch C."/>
            <person name="Baldwin D."/>
            <person name="Ballew R.M."/>
            <person name="Basu A."/>
            <person name="Baxendale J."/>
            <person name="Bayraktaroglu L."/>
            <person name="Beasley E.M."/>
            <person name="Beeson K.Y."/>
            <person name="Benos P.V."/>
            <person name="Berman B.P."/>
            <person name="Bhandari D."/>
            <person name="Bolshakov S."/>
            <person name="Borkova D."/>
            <person name="Botchan M.R."/>
            <person name="Bouck J."/>
            <person name="Brokstein P."/>
            <person name="Brottier P."/>
            <person name="Burtis K.C."/>
            <person name="Busam D.A."/>
            <person name="Butler H."/>
            <person name="Cadieu E."/>
            <person name="Center A."/>
            <person name="Chandra I."/>
            <person name="Cherry J.M."/>
            <person name="Cawley S."/>
            <person name="Dahlke C."/>
            <person name="Davenport L.B."/>
            <person name="Davies P."/>
            <person name="de Pablos B."/>
            <person name="Delcher A."/>
            <person name="Deng Z."/>
            <person name="Mays A.D."/>
            <person name="Dew I."/>
            <person name="Dietz S.M."/>
            <person name="Dodson K."/>
            <person name="Doup L.E."/>
            <person name="Downes M."/>
            <person name="Dugan-Rocha S."/>
            <person name="Dunkov B.C."/>
            <person name="Dunn P."/>
            <person name="Durbin K.J."/>
            <person name="Evangelista C.C."/>
            <person name="Ferraz C."/>
            <person name="Ferriera S."/>
            <person name="Fleischmann W."/>
            <person name="Fosler C."/>
            <person name="Gabrielian A.E."/>
            <person name="Garg N.S."/>
            <person name="Gelbart W.M."/>
            <person name="Glasser K."/>
            <person name="Glodek A."/>
            <person name="Gong F."/>
            <person name="Gorrell J.H."/>
            <person name="Gu Z."/>
            <person name="Guan P."/>
            <person name="Harris M."/>
            <person name="Harris N.L."/>
            <person name="Harvey D.A."/>
            <person name="Heiman T.J."/>
            <person name="Hernandez J.R."/>
            <person name="Houck J."/>
            <person name="Hostin D."/>
            <person name="Houston K.A."/>
            <person name="Howland T.J."/>
            <person name="Wei M.-H."/>
            <person name="Ibegwam C."/>
            <person name="Jalali M."/>
            <person name="Kalush F."/>
            <person name="Karpen G.H."/>
            <person name="Ke Z."/>
            <person name="Kennison J.A."/>
            <person name="Ketchum K.A."/>
            <person name="Kimmel B.E."/>
            <person name="Kodira C.D."/>
            <person name="Kraft C.L."/>
            <person name="Kravitz S."/>
            <person name="Kulp D."/>
            <person name="Lai Z."/>
            <person name="Lasko P."/>
            <person name="Lei Y."/>
            <person name="Levitsky A.A."/>
            <person name="Li J.H."/>
            <person name="Li Z."/>
            <person name="Liang Y."/>
            <person name="Lin X."/>
            <person name="Liu X."/>
            <person name="Mattei B."/>
            <person name="McIntosh T.C."/>
            <person name="McLeod M.P."/>
            <person name="McPherson D."/>
            <person name="Merkulov G."/>
            <person name="Milshina N.V."/>
            <person name="Mobarry C."/>
            <person name="Morris J."/>
            <person name="Moshrefi A."/>
            <person name="Mount S.M."/>
            <person name="Moy M."/>
            <person name="Murphy B."/>
            <person name="Murphy L."/>
            <person name="Muzny D.M."/>
            <person name="Nelson D.L."/>
            <person name="Nelson D.R."/>
            <person name="Nelson K.A."/>
            <person name="Nixon K."/>
            <person name="Nusskern D.R."/>
            <person name="Pacleb J.M."/>
            <person name="Palazzolo M."/>
            <person name="Pittman G.S."/>
            <person name="Pan S."/>
            <person name="Pollard J."/>
            <person name="Puri V."/>
            <person name="Reese M.G."/>
            <person name="Reinert K."/>
            <person name="Remington K."/>
            <person name="Saunders R.D.C."/>
            <person name="Scheeler F."/>
            <person name="Shen H."/>
            <person name="Shue B.C."/>
            <person name="Siden-Kiamos I."/>
            <person name="Simpson M."/>
            <person name="Skupski M.P."/>
            <person name="Smith T.J."/>
            <person name="Spier E."/>
            <person name="Spradling A.C."/>
            <person name="Stapleton M."/>
            <person name="Strong R."/>
            <person name="Sun E."/>
            <person name="Svirskas R."/>
            <person name="Tector C."/>
            <person name="Turner R."/>
            <person name="Venter E."/>
            <person name="Wang A.H."/>
            <person name="Wang X."/>
            <person name="Wang Z.-Y."/>
            <person name="Wassarman D.A."/>
            <person name="Weinstock G.M."/>
            <person name="Weissenbach J."/>
            <person name="Williams S.M."/>
            <person name="Woodage T."/>
            <person name="Worley K.C."/>
            <person name="Wu D."/>
            <person name="Yang S."/>
            <person name="Yao Q.A."/>
            <person name="Ye J."/>
            <person name="Yeh R.-F."/>
            <person name="Zaveri J.S."/>
            <person name="Zhan M."/>
            <person name="Zhang G."/>
            <person name="Zhao Q."/>
            <person name="Zheng L."/>
            <person name="Zheng X.H."/>
            <person name="Zhong F.N."/>
            <person name="Zhong W."/>
            <person name="Zhou X."/>
            <person name="Zhu S.C."/>
            <person name="Zhu X."/>
            <person name="Smith H.O."/>
            <person name="Gibbs R.A."/>
            <person name="Myers E.W."/>
            <person name="Rubin G.M."/>
            <person name="Venter J.C."/>
        </authorList>
    </citation>
    <scope>NUCLEOTIDE SEQUENCE [LARGE SCALE GENOMIC DNA]</scope>
    <source>
        <strain>Berkeley</strain>
    </source>
</reference>
<reference key="4">
    <citation type="journal article" date="2002" name="Genome Biol.">
        <title>Annotation of the Drosophila melanogaster euchromatic genome: a systematic review.</title>
        <authorList>
            <person name="Misra S."/>
            <person name="Crosby M.A."/>
            <person name="Mungall C.J."/>
            <person name="Matthews B.B."/>
            <person name="Campbell K.S."/>
            <person name="Hradecky P."/>
            <person name="Huang Y."/>
            <person name="Kaminker J.S."/>
            <person name="Millburn G.H."/>
            <person name="Prochnik S.E."/>
            <person name="Smith C.D."/>
            <person name="Tupy J.L."/>
            <person name="Whitfield E.J."/>
            <person name="Bayraktaroglu L."/>
            <person name="Berman B.P."/>
            <person name="Bettencourt B.R."/>
            <person name="Celniker S.E."/>
            <person name="de Grey A.D.N.J."/>
            <person name="Drysdale R.A."/>
            <person name="Harris N.L."/>
            <person name="Richter J."/>
            <person name="Russo S."/>
            <person name="Schroeder A.J."/>
            <person name="Shu S.Q."/>
            <person name="Stapleton M."/>
            <person name="Yamada C."/>
            <person name="Ashburner M."/>
            <person name="Gelbart W.M."/>
            <person name="Rubin G.M."/>
            <person name="Lewis S.E."/>
        </authorList>
    </citation>
    <scope>GENOME REANNOTATION</scope>
    <scope>ALTERNATIVE SPLICING</scope>
    <source>
        <strain>Berkeley</strain>
    </source>
</reference>
<reference key="5">
    <citation type="journal article" date="2000" name="Science">
        <title>From sequence to chromosome: the tip of the X chromosome of D. melanogaster.</title>
        <authorList>
            <person name="Benos P.V."/>
            <person name="Gatt M.K."/>
            <person name="Ashburner M."/>
            <person name="Murphy L."/>
            <person name="Harris D."/>
            <person name="Barrell B.G."/>
            <person name="Ferraz C."/>
            <person name="Vidal S."/>
            <person name="Brun C."/>
            <person name="Demailles J."/>
            <person name="Cadieu E."/>
            <person name="Dreano S."/>
            <person name="Gloux S."/>
            <person name="Lelaure V."/>
            <person name="Mottier S."/>
            <person name="Galibert F."/>
            <person name="Borkova D."/>
            <person name="Minana B."/>
            <person name="Kafatos F.C."/>
            <person name="Louis C."/>
            <person name="Siden-Kiamos I."/>
            <person name="Bolshakov S."/>
            <person name="Papagiannakis G."/>
            <person name="Spanos L."/>
            <person name="Cox S."/>
            <person name="Madueno E."/>
            <person name="de Pablos B."/>
            <person name="Modolell J."/>
            <person name="Peter A."/>
            <person name="Schoettler P."/>
            <person name="Werner M."/>
            <person name="Mourkioti F."/>
            <person name="Beinert N."/>
            <person name="Dowe G."/>
            <person name="Schaefer U."/>
            <person name="Jaeckle H."/>
            <person name="Bucheton A."/>
            <person name="Callister D.M."/>
            <person name="Campbell L.A."/>
            <person name="Darlamitsou A."/>
            <person name="Henderson N.S."/>
            <person name="McMillan P.J."/>
            <person name="Salles C."/>
            <person name="Tait E.A."/>
            <person name="Valenti P."/>
            <person name="Saunders R.D.C."/>
            <person name="Glover D.M."/>
        </authorList>
    </citation>
    <scope>NUCLEOTIDE SEQUENCE [LARGE SCALE GENOMIC DNA]</scope>
    <scope>ALTERNATIVE SPLICING</scope>
    <source>
        <strain>Oregon-R</strain>
    </source>
</reference>
<reference key="6">
    <citation type="journal article" date="2002" name="Genome Biol.">
        <title>A Drosophila full-length cDNA resource.</title>
        <authorList>
            <person name="Stapleton M."/>
            <person name="Carlson J.W."/>
            <person name="Brokstein P."/>
            <person name="Yu C."/>
            <person name="Champe M."/>
            <person name="George R.A."/>
            <person name="Guarin H."/>
            <person name="Kronmiller B."/>
            <person name="Pacleb J.M."/>
            <person name="Park S."/>
            <person name="Wan K.H."/>
            <person name="Rubin G.M."/>
            <person name="Celniker S.E."/>
        </authorList>
    </citation>
    <scope>NUCLEOTIDE SEQUENCE [LARGE SCALE MRNA] (ISOFORM A)</scope>
    <source>
        <strain>Berkeley</strain>
        <tissue>Embryo</tissue>
    </source>
</reference>
<protein>
    <recommendedName>
        <fullName>Protein elav</fullName>
    </recommendedName>
    <alternativeName>
        <fullName>Embryonic lethal abnormal visual protein</fullName>
    </alternativeName>
</protein>
<gene>
    <name type="primary">elav</name>
    <name type="ORF">CG4262</name>
</gene>
<accession>P16914</accession>
<accession>Q7K7L9</accession>
<accession>Q9V3F6</accession>
<feature type="chain" id="PRO_0000081575" description="Protein elav">
    <location>
        <begin position="1"/>
        <end position="483"/>
    </location>
</feature>
<feature type="domain" description="RRM 1" evidence="1">
    <location>
        <begin position="149"/>
        <end position="240"/>
    </location>
</feature>
<feature type="domain" description="RRM 2" evidence="1">
    <location>
        <begin position="248"/>
        <end position="329"/>
    </location>
</feature>
<feature type="domain" description="RRM 3" evidence="1">
    <location>
        <begin position="402"/>
        <end position="480"/>
    </location>
</feature>
<feature type="region of interest" description="Disordered" evidence="2">
    <location>
        <begin position="120"/>
        <end position="146"/>
    </location>
</feature>
<feature type="compositionally biased region" description="Low complexity" evidence="2">
    <location>
        <begin position="120"/>
        <end position="144"/>
    </location>
</feature>
<feature type="splice variant" id="VSP_036582" description="In isoform B." evidence="4">
    <location>
        <begin position="1"/>
        <end position="4"/>
    </location>
</feature>
<comment type="function">
    <text evidence="3">Required for the proper development and maintenance of neurons presumably by affecting RNA metabolism.</text>
</comment>
<comment type="alternative products">
    <event type="alternative splicing"/>
    <isoform>
        <id>P16914-1</id>
        <name>A</name>
        <sequence type="displayed"/>
    </isoform>
    <isoform>
        <id>P16914-2</id>
        <name>B</name>
        <sequence type="described" ref="VSP_036582"/>
    </isoform>
</comment>
<comment type="similarity">
    <text evidence="4">Belongs to the RRM elav family.</text>
</comment>
<organism>
    <name type="scientific">Drosophila melanogaster</name>
    <name type="common">Fruit fly</name>
    <dbReference type="NCBI Taxonomy" id="7227"/>
    <lineage>
        <taxon>Eukaryota</taxon>
        <taxon>Metazoa</taxon>
        <taxon>Ecdysozoa</taxon>
        <taxon>Arthropoda</taxon>
        <taxon>Hexapoda</taxon>
        <taxon>Insecta</taxon>
        <taxon>Pterygota</taxon>
        <taxon>Neoptera</taxon>
        <taxon>Endopterygota</taxon>
        <taxon>Diptera</taxon>
        <taxon>Brachycera</taxon>
        <taxon>Muscomorpha</taxon>
        <taxon>Ephydroidea</taxon>
        <taxon>Drosophilidae</taxon>
        <taxon>Drosophila</taxon>
        <taxon>Sophophora</taxon>
    </lineage>
</organism>